<proteinExistence type="inferred from homology"/>
<protein>
    <recommendedName>
        <fullName>Transmembrane protein 190</fullName>
    </recommendedName>
</protein>
<feature type="signal peptide" evidence="2">
    <location>
        <begin position="1"/>
        <end position="21"/>
    </location>
</feature>
<feature type="chain" id="PRO_0000406754" description="Transmembrane protein 190">
    <location>
        <begin position="22"/>
        <end position="181"/>
    </location>
</feature>
<feature type="topological domain" description="Extracellular" evidence="2">
    <location>
        <begin position="22"/>
        <end position="81"/>
    </location>
</feature>
<feature type="transmembrane region" description="Helical" evidence="2">
    <location>
        <begin position="82"/>
        <end position="102"/>
    </location>
</feature>
<feature type="topological domain" description="Cytoplasmic" evidence="2">
    <location>
        <begin position="103"/>
        <end position="181"/>
    </location>
</feature>
<feature type="domain" description="P-type">
    <location>
        <begin position="31"/>
        <end position="71"/>
    </location>
</feature>
<feature type="region of interest" description="Disordered" evidence="3">
    <location>
        <begin position="135"/>
        <end position="181"/>
    </location>
</feature>
<feature type="compositionally biased region" description="Polar residues" evidence="3">
    <location>
        <begin position="142"/>
        <end position="152"/>
    </location>
</feature>
<feature type="compositionally biased region" description="Acidic residues" evidence="3">
    <location>
        <begin position="170"/>
        <end position="181"/>
    </location>
</feature>
<feature type="disulfide bond" evidence="1">
    <location>
        <begin position="33"/>
        <end position="61"/>
    </location>
</feature>
<feature type="disulfide bond" evidence="1">
    <location>
        <begin position="43"/>
        <end position="60"/>
    </location>
</feature>
<feature type="disulfide bond" evidence="1">
    <location>
        <begin position="55"/>
        <end position="67"/>
    </location>
</feature>
<evidence type="ECO:0000250" key="1"/>
<evidence type="ECO:0000255" key="2"/>
<evidence type="ECO:0000256" key="3">
    <source>
        <dbReference type="SAM" id="MobiDB-lite"/>
    </source>
</evidence>
<sequence length="181" mass="19777">MVASGIPALSLFLLMQGSVDGNGIQGFFYPWSCEGDVWDRESCGGQAAIENPNLCLRLRCCYRDGVCYHQRPDETMRRKHMWALGWTCGGLLFLISSICLFWWAKRRDMLHLPGFLKGKCDLSRTVSLLSKDRGTLSDKKTSAGSVPTSLPTEGNADVSGATEGEGTTEGGEETEGGEDED</sequence>
<reference key="1">
    <citation type="journal article" date="2005" name="Nature">
        <title>Genome sequence, comparative analysis and haplotype structure of the domestic dog.</title>
        <authorList>
            <person name="Lindblad-Toh K."/>
            <person name="Wade C.M."/>
            <person name="Mikkelsen T.S."/>
            <person name="Karlsson E.K."/>
            <person name="Jaffe D.B."/>
            <person name="Kamal M."/>
            <person name="Clamp M."/>
            <person name="Chang J.L."/>
            <person name="Kulbokas E.J. III"/>
            <person name="Zody M.C."/>
            <person name="Mauceli E."/>
            <person name="Xie X."/>
            <person name="Breen M."/>
            <person name="Wayne R.K."/>
            <person name="Ostrander E.A."/>
            <person name="Ponting C.P."/>
            <person name="Galibert F."/>
            <person name="Smith D.R."/>
            <person name="deJong P.J."/>
            <person name="Kirkness E.F."/>
            <person name="Alvarez P."/>
            <person name="Biagi T."/>
            <person name="Brockman W."/>
            <person name="Butler J."/>
            <person name="Chin C.-W."/>
            <person name="Cook A."/>
            <person name="Cuff J."/>
            <person name="Daly M.J."/>
            <person name="DeCaprio D."/>
            <person name="Gnerre S."/>
            <person name="Grabherr M."/>
            <person name="Kellis M."/>
            <person name="Kleber M."/>
            <person name="Bardeleben C."/>
            <person name="Goodstadt L."/>
            <person name="Heger A."/>
            <person name="Hitte C."/>
            <person name="Kim L."/>
            <person name="Koepfli K.-P."/>
            <person name="Parker H.G."/>
            <person name="Pollinger J.P."/>
            <person name="Searle S.M.J."/>
            <person name="Sutter N.B."/>
            <person name="Thomas R."/>
            <person name="Webber C."/>
            <person name="Baldwin J."/>
            <person name="Abebe A."/>
            <person name="Abouelleil A."/>
            <person name="Aftuck L."/>
            <person name="Ait-Zahra M."/>
            <person name="Aldredge T."/>
            <person name="Allen N."/>
            <person name="An P."/>
            <person name="Anderson S."/>
            <person name="Antoine C."/>
            <person name="Arachchi H."/>
            <person name="Aslam A."/>
            <person name="Ayotte L."/>
            <person name="Bachantsang P."/>
            <person name="Barry A."/>
            <person name="Bayul T."/>
            <person name="Benamara M."/>
            <person name="Berlin A."/>
            <person name="Bessette D."/>
            <person name="Blitshteyn B."/>
            <person name="Bloom T."/>
            <person name="Blye J."/>
            <person name="Boguslavskiy L."/>
            <person name="Bonnet C."/>
            <person name="Boukhgalter B."/>
            <person name="Brown A."/>
            <person name="Cahill P."/>
            <person name="Calixte N."/>
            <person name="Camarata J."/>
            <person name="Cheshatsang Y."/>
            <person name="Chu J."/>
            <person name="Citroen M."/>
            <person name="Collymore A."/>
            <person name="Cooke P."/>
            <person name="Dawoe T."/>
            <person name="Daza R."/>
            <person name="Decktor K."/>
            <person name="DeGray S."/>
            <person name="Dhargay N."/>
            <person name="Dooley K."/>
            <person name="Dooley K."/>
            <person name="Dorje P."/>
            <person name="Dorjee K."/>
            <person name="Dorris L."/>
            <person name="Duffey N."/>
            <person name="Dupes A."/>
            <person name="Egbiremolen O."/>
            <person name="Elong R."/>
            <person name="Falk J."/>
            <person name="Farina A."/>
            <person name="Faro S."/>
            <person name="Ferguson D."/>
            <person name="Ferreira P."/>
            <person name="Fisher S."/>
            <person name="FitzGerald M."/>
            <person name="Foley K."/>
            <person name="Foley C."/>
            <person name="Franke A."/>
            <person name="Friedrich D."/>
            <person name="Gage D."/>
            <person name="Garber M."/>
            <person name="Gearin G."/>
            <person name="Giannoukos G."/>
            <person name="Goode T."/>
            <person name="Goyette A."/>
            <person name="Graham J."/>
            <person name="Grandbois E."/>
            <person name="Gyaltsen K."/>
            <person name="Hafez N."/>
            <person name="Hagopian D."/>
            <person name="Hagos B."/>
            <person name="Hall J."/>
            <person name="Healy C."/>
            <person name="Hegarty R."/>
            <person name="Honan T."/>
            <person name="Horn A."/>
            <person name="Houde N."/>
            <person name="Hughes L."/>
            <person name="Hunnicutt L."/>
            <person name="Husby M."/>
            <person name="Jester B."/>
            <person name="Jones C."/>
            <person name="Kamat A."/>
            <person name="Kanga B."/>
            <person name="Kells C."/>
            <person name="Khazanovich D."/>
            <person name="Kieu A.C."/>
            <person name="Kisner P."/>
            <person name="Kumar M."/>
            <person name="Lance K."/>
            <person name="Landers T."/>
            <person name="Lara M."/>
            <person name="Lee W."/>
            <person name="Leger J.-P."/>
            <person name="Lennon N."/>
            <person name="Leuper L."/>
            <person name="LeVine S."/>
            <person name="Liu J."/>
            <person name="Liu X."/>
            <person name="Lokyitsang Y."/>
            <person name="Lokyitsang T."/>
            <person name="Lui A."/>
            <person name="Macdonald J."/>
            <person name="Major J."/>
            <person name="Marabella R."/>
            <person name="Maru K."/>
            <person name="Matthews C."/>
            <person name="McDonough S."/>
            <person name="Mehta T."/>
            <person name="Meldrim J."/>
            <person name="Melnikov A."/>
            <person name="Meneus L."/>
            <person name="Mihalev A."/>
            <person name="Mihova T."/>
            <person name="Miller K."/>
            <person name="Mittelman R."/>
            <person name="Mlenga V."/>
            <person name="Mulrain L."/>
            <person name="Munson G."/>
            <person name="Navidi A."/>
            <person name="Naylor J."/>
            <person name="Nguyen T."/>
            <person name="Nguyen N."/>
            <person name="Nguyen C."/>
            <person name="Nguyen T."/>
            <person name="Nicol R."/>
            <person name="Norbu N."/>
            <person name="Norbu C."/>
            <person name="Novod N."/>
            <person name="Nyima T."/>
            <person name="Olandt P."/>
            <person name="O'Neill B."/>
            <person name="O'Neill K."/>
            <person name="Osman S."/>
            <person name="Oyono L."/>
            <person name="Patti C."/>
            <person name="Perrin D."/>
            <person name="Phunkhang P."/>
            <person name="Pierre F."/>
            <person name="Priest M."/>
            <person name="Rachupka A."/>
            <person name="Raghuraman S."/>
            <person name="Rameau R."/>
            <person name="Ray V."/>
            <person name="Raymond C."/>
            <person name="Rege F."/>
            <person name="Rise C."/>
            <person name="Rogers J."/>
            <person name="Rogov P."/>
            <person name="Sahalie J."/>
            <person name="Settipalli S."/>
            <person name="Sharpe T."/>
            <person name="Shea T."/>
            <person name="Sheehan M."/>
            <person name="Sherpa N."/>
            <person name="Shi J."/>
            <person name="Shih D."/>
            <person name="Sloan J."/>
            <person name="Smith C."/>
            <person name="Sparrow T."/>
            <person name="Stalker J."/>
            <person name="Stange-Thomann N."/>
            <person name="Stavropoulos S."/>
            <person name="Stone C."/>
            <person name="Stone S."/>
            <person name="Sykes S."/>
            <person name="Tchuinga P."/>
            <person name="Tenzing P."/>
            <person name="Tesfaye S."/>
            <person name="Thoulutsang D."/>
            <person name="Thoulutsang Y."/>
            <person name="Topham K."/>
            <person name="Topping I."/>
            <person name="Tsamla T."/>
            <person name="Vassiliev H."/>
            <person name="Venkataraman V."/>
            <person name="Vo A."/>
            <person name="Wangchuk T."/>
            <person name="Wangdi T."/>
            <person name="Weiand M."/>
            <person name="Wilkinson J."/>
            <person name="Wilson A."/>
            <person name="Yadav S."/>
            <person name="Yang S."/>
            <person name="Yang X."/>
            <person name="Young G."/>
            <person name="Yu Q."/>
            <person name="Zainoun J."/>
            <person name="Zembek L."/>
            <person name="Zimmer A."/>
            <person name="Lander E.S."/>
        </authorList>
    </citation>
    <scope>NUCLEOTIDE SEQUENCE [LARGE SCALE GENOMIC DNA]</scope>
    <source>
        <strain>Boxer</strain>
    </source>
</reference>
<comment type="subcellular location">
    <subcellularLocation>
        <location evidence="1">Membrane</location>
        <topology evidence="1">Single-pass type I membrane protein</topology>
    </subcellularLocation>
</comment>
<keyword id="KW-1015">Disulfide bond</keyword>
<keyword id="KW-0472">Membrane</keyword>
<keyword id="KW-1185">Reference proteome</keyword>
<keyword id="KW-0732">Signal</keyword>
<keyword id="KW-0812">Transmembrane</keyword>
<keyword id="KW-1133">Transmembrane helix</keyword>
<organism>
    <name type="scientific">Canis lupus familiaris</name>
    <name type="common">Dog</name>
    <name type="synonym">Canis familiaris</name>
    <dbReference type="NCBI Taxonomy" id="9615"/>
    <lineage>
        <taxon>Eukaryota</taxon>
        <taxon>Metazoa</taxon>
        <taxon>Chordata</taxon>
        <taxon>Craniata</taxon>
        <taxon>Vertebrata</taxon>
        <taxon>Euteleostomi</taxon>
        <taxon>Mammalia</taxon>
        <taxon>Eutheria</taxon>
        <taxon>Laurasiatheria</taxon>
        <taxon>Carnivora</taxon>
        <taxon>Caniformia</taxon>
        <taxon>Canidae</taxon>
        <taxon>Canis</taxon>
    </lineage>
</organism>
<name>TM190_CANLF</name>
<dbReference type="RefSeq" id="NP_001300704.1">
    <property type="nucleotide sequence ID" value="NM_001313775.1"/>
</dbReference>
<dbReference type="FunCoup" id="E2R0A5">
    <property type="interactions" value="5"/>
</dbReference>
<dbReference type="STRING" id="9615.ENSCAFP00000003759"/>
<dbReference type="PaxDb" id="9612-ENSCAFP00000003759"/>
<dbReference type="Ensembl" id="ENSCAFT00000004067.5">
    <property type="protein sequence ID" value="ENSCAFP00000003759.3"/>
    <property type="gene ID" value="ENSCAFG00000002587.5"/>
</dbReference>
<dbReference type="Ensembl" id="ENSCAFT00030001545.1">
    <property type="protein sequence ID" value="ENSCAFP00030001371.1"/>
    <property type="gene ID" value="ENSCAFG00030000904.1"/>
</dbReference>
<dbReference type="Ensembl" id="ENSCAFT00040014669.1">
    <property type="protein sequence ID" value="ENSCAFP00040012687.1"/>
    <property type="gene ID" value="ENSCAFG00040007881.1"/>
</dbReference>
<dbReference type="Ensembl" id="ENSCAFT00845001619.1">
    <property type="protein sequence ID" value="ENSCAFP00845001281.1"/>
    <property type="gene ID" value="ENSCAFG00845000949.1"/>
</dbReference>
<dbReference type="GeneID" id="476379"/>
<dbReference type="KEGG" id="cfa:476379"/>
<dbReference type="CTD" id="147744"/>
<dbReference type="VEuPathDB" id="HostDB:ENSCAFG00845000949"/>
<dbReference type="VGNC" id="VGNC:47515">
    <property type="gene designation" value="TMEM190"/>
</dbReference>
<dbReference type="eggNOG" id="ENOG502T0Q7">
    <property type="taxonomic scope" value="Eukaryota"/>
</dbReference>
<dbReference type="GeneTree" id="ENSGT00390000006710"/>
<dbReference type="HOGENOM" id="CLU_130475_0_0_1"/>
<dbReference type="InParanoid" id="E2R0A5"/>
<dbReference type="OMA" id="SSICLFW"/>
<dbReference type="OrthoDB" id="9529881at2759"/>
<dbReference type="TreeFam" id="TF337652"/>
<dbReference type="Proteomes" id="UP000002254">
    <property type="component" value="Chromosome 1"/>
</dbReference>
<dbReference type="Proteomes" id="UP000694429">
    <property type="component" value="Chromosome 1"/>
</dbReference>
<dbReference type="Proteomes" id="UP000694542">
    <property type="component" value="Chromosome 1"/>
</dbReference>
<dbReference type="Proteomes" id="UP000805418">
    <property type="component" value="Chromosome 1"/>
</dbReference>
<dbReference type="Bgee" id="ENSCAFG00000002587">
    <property type="expression patterns" value="Expressed in testis and 39 other cell types or tissues"/>
</dbReference>
<dbReference type="GO" id="GO:0002079">
    <property type="term" value="C:inner acrosomal membrane"/>
    <property type="evidence" value="ECO:0000318"/>
    <property type="project" value="GO_Central"/>
</dbReference>
<dbReference type="GO" id="GO:0042802">
    <property type="term" value="F:identical protein binding"/>
    <property type="evidence" value="ECO:0007669"/>
    <property type="project" value="Ensembl"/>
</dbReference>
<dbReference type="GO" id="GO:0002244">
    <property type="term" value="P:hematopoietic progenitor cell differentiation"/>
    <property type="evidence" value="ECO:0000318"/>
    <property type="project" value="GO_Central"/>
</dbReference>
<dbReference type="InterPro" id="IPR044913">
    <property type="entry name" value="P_trefoil_dom_sf"/>
</dbReference>
<dbReference type="InterPro" id="IPR028248">
    <property type="entry name" value="TMEM190"/>
</dbReference>
<dbReference type="PANTHER" id="PTHR37868">
    <property type="entry name" value="TRANSMEMBRANE PROTEIN 190"/>
    <property type="match status" value="1"/>
</dbReference>
<dbReference type="PANTHER" id="PTHR37868:SF1">
    <property type="entry name" value="TRANSMEMBRANE PROTEIN 190"/>
    <property type="match status" value="1"/>
</dbReference>
<dbReference type="Pfam" id="PF15431">
    <property type="entry name" value="TMEM190"/>
    <property type="match status" value="1"/>
</dbReference>
<dbReference type="SUPFAM" id="SSF57492">
    <property type="entry name" value="Trefoil"/>
    <property type="match status" value="1"/>
</dbReference>
<gene>
    <name type="primary">TMEM190</name>
</gene>
<accession>E2R0A5</accession>